<sequence length="366" mass="39932">MTKITLSDLPLREELRGEHAYGAPQLNVDIRLNTNENPYPPSEALVADLVATVDKIATELNRYPERDAVELRDELAAYITKQTGVAVTRDNLWAANGSNEILQQLLQAFGGPGRTALGFQPSYSMHPILAKGTHTEFIAVSRGADFRIDMDVALEEIRAKQPDIVFVTTPNNPTGDVTSLDDIERIINVAPGIVIVDEAYAEFSPSPSATTLLEKYPTKLVVSRTMSKAFDFAGGRLGYFVANPAFIDAVMLVRLPYHLSALSQAAAIVALRHSADTLGTVEKLSVERVRVAARLEELGYAVVPSESNFVFFGDFSDQHAAWQAFLDRGVLIRDVGIAGHLRTTIGVPEENDAFLDAAAEIIKLNL</sequence>
<comment type="catalytic activity">
    <reaction evidence="1">
        <text>L-histidinol phosphate + 2-oxoglutarate = 3-(imidazol-4-yl)-2-oxopropyl phosphate + L-glutamate</text>
        <dbReference type="Rhea" id="RHEA:23744"/>
        <dbReference type="ChEBI" id="CHEBI:16810"/>
        <dbReference type="ChEBI" id="CHEBI:29985"/>
        <dbReference type="ChEBI" id="CHEBI:57766"/>
        <dbReference type="ChEBI" id="CHEBI:57980"/>
        <dbReference type="EC" id="2.6.1.9"/>
    </reaction>
</comment>
<comment type="cofactor">
    <cofactor evidence="1">
        <name>pyridoxal 5'-phosphate</name>
        <dbReference type="ChEBI" id="CHEBI:597326"/>
    </cofactor>
</comment>
<comment type="pathway">
    <text evidence="1">Amino-acid biosynthesis; L-histidine biosynthesis; L-histidine from 5-phospho-alpha-D-ribose 1-diphosphate: step 7/9.</text>
</comment>
<comment type="subunit">
    <text evidence="1">Homodimer.</text>
</comment>
<comment type="similarity">
    <text evidence="1">Belongs to the class-II pyridoxal-phosphate-dependent aminotransferase family. Histidinol-phosphate aminotransferase subfamily.</text>
</comment>
<dbReference type="EC" id="2.6.1.9" evidence="1"/>
<dbReference type="EMBL" id="AP009044">
    <property type="protein sequence ID" value="BAF54982.1"/>
    <property type="molecule type" value="Genomic_DNA"/>
</dbReference>
<dbReference type="RefSeq" id="WP_003856426.1">
    <property type="nucleotide sequence ID" value="NC_009342.1"/>
</dbReference>
<dbReference type="SMR" id="A4QFG6"/>
<dbReference type="KEGG" id="cgt:cgR_1985"/>
<dbReference type="HOGENOM" id="CLU_017584_3_1_11"/>
<dbReference type="PhylomeDB" id="A4QFG6"/>
<dbReference type="UniPathway" id="UPA00031">
    <property type="reaction ID" value="UER00012"/>
</dbReference>
<dbReference type="Proteomes" id="UP000006698">
    <property type="component" value="Chromosome"/>
</dbReference>
<dbReference type="GO" id="GO:0004400">
    <property type="term" value="F:histidinol-phosphate transaminase activity"/>
    <property type="evidence" value="ECO:0007669"/>
    <property type="project" value="UniProtKB-UniRule"/>
</dbReference>
<dbReference type="GO" id="GO:0030170">
    <property type="term" value="F:pyridoxal phosphate binding"/>
    <property type="evidence" value="ECO:0007669"/>
    <property type="project" value="InterPro"/>
</dbReference>
<dbReference type="GO" id="GO:0000105">
    <property type="term" value="P:L-histidine biosynthetic process"/>
    <property type="evidence" value="ECO:0007669"/>
    <property type="project" value="UniProtKB-UniRule"/>
</dbReference>
<dbReference type="CDD" id="cd00609">
    <property type="entry name" value="AAT_like"/>
    <property type="match status" value="1"/>
</dbReference>
<dbReference type="Gene3D" id="3.90.1150.10">
    <property type="entry name" value="Aspartate Aminotransferase, domain 1"/>
    <property type="match status" value="1"/>
</dbReference>
<dbReference type="Gene3D" id="3.40.640.10">
    <property type="entry name" value="Type I PLP-dependent aspartate aminotransferase-like (Major domain)"/>
    <property type="match status" value="1"/>
</dbReference>
<dbReference type="HAMAP" id="MF_01023">
    <property type="entry name" value="HisC_aminotrans_2"/>
    <property type="match status" value="1"/>
</dbReference>
<dbReference type="InterPro" id="IPR004839">
    <property type="entry name" value="Aminotransferase_I/II_large"/>
</dbReference>
<dbReference type="InterPro" id="IPR005861">
    <property type="entry name" value="HisP_aminotrans"/>
</dbReference>
<dbReference type="InterPro" id="IPR015424">
    <property type="entry name" value="PyrdxlP-dep_Trfase"/>
</dbReference>
<dbReference type="InterPro" id="IPR015421">
    <property type="entry name" value="PyrdxlP-dep_Trfase_major"/>
</dbReference>
<dbReference type="InterPro" id="IPR015422">
    <property type="entry name" value="PyrdxlP-dep_Trfase_small"/>
</dbReference>
<dbReference type="NCBIfam" id="TIGR01141">
    <property type="entry name" value="hisC"/>
    <property type="match status" value="1"/>
</dbReference>
<dbReference type="NCBIfam" id="NF002877">
    <property type="entry name" value="PRK03317.1"/>
    <property type="match status" value="1"/>
</dbReference>
<dbReference type="PANTHER" id="PTHR42885:SF2">
    <property type="entry name" value="HISTIDINOL-PHOSPHATE AMINOTRANSFERASE"/>
    <property type="match status" value="1"/>
</dbReference>
<dbReference type="PANTHER" id="PTHR42885">
    <property type="entry name" value="HISTIDINOL-PHOSPHATE AMINOTRANSFERASE-RELATED"/>
    <property type="match status" value="1"/>
</dbReference>
<dbReference type="Pfam" id="PF00155">
    <property type="entry name" value="Aminotran_1_2"/>
    <property type="match status" value="1"/>
</dbReference>
<dbReference type="SUPFAM" id="SSF53383">
    <property type="entry name" value="PLP-dependent transferases"/>
    <property type="match status" value="1"/>
</dbReference>
<accession>A4QFG6</accession>
<feature type="chain" id="PRO_1000063471" description="Histidinol-phosphate aminotransferase">
    <location>
        <begin position="1"/>
        <end position="366"/>
    </location>
</feature>
<feature type="modified residue" description="N6-(pyridoxal phosphate)lysine" evidence="1">
    <location>
        <position position="228"/>
    </location>
</feature>
<organism>
    <name type="scientific">Corynebacterium glutamicum (strain R)</name>
    <dbReference type="NCBI Taxonomy" id="340322"/>
    <lineage>
        <taxon>Bacteria</taxon>
        <taxon>Bacillati</taxon>
        <taxon>Actinomycetota</taxon>
        <taxon>Actinomycetes</taxon>
        <taxon>Mycobacteriales</taxon>
        <taxon>Corynebacteriaceae</taxon>
        <taxon>Corynebacterium</taxon>
    </lineage>
</organism>
<name>HIS8_CORGB</name>
<proteinExistence type="inferred from homology"/>
<reference key="1">
    <citation type="journal article" date="2007" name="Microbiology">
        <title>Comparative analysis of the Corynebacterium glutamicum group and complete genome sequence of strain R.</title>
        <authorList>
            <person name="Yukawa H."/>
            <person name="Omumasaba C.A."/>
            <person name="Nonaka H."/>
            <person name="Kos P."/>
            <person name="Okai N."/>
            <person name="Suzuki N."/>
            <person name="Suda M."/>
            <person name="Tsuge Y."/>
            <person name="Watanabe J."/>
            <person name="Ikeda Y."/>
            <person name="Vertes A.A."/>
            <person name="Inui M."/>
        </authorList>
    </citation>
    <scope>NUCLEOTIDE SEQUENCE [LARGE SCALE GENOMIC DNA]</scope>
    <source>
        <strain>R</strain>
    </source>
</reference>
<gene>
    <name evidence="1" type="primary">hisC</name>
    <name type="ordered locus">cgR_1985</name>
</gene>
<keyword id="KW-0028">Amino-acid biosynthesis</keyword>
<keyword id="KW-0032">Aminotransferase</keyword>
<keyword id="KW-0368">Histidine biosynthesis</keyword>
<keyword id="KW-0663">Pyridoxal phosphate</keyword>
<keyword id="KW-0808">Transferase</keyword>
<evidence type="ECO:0000255" key="1">
    <source>
        <dbReference type="HAMAP-Rule" id="MF_01023"/>
    </source>
</evidence>
<protein>
    <recommendedName>
        <fullName evidence="1">Histidinol-phosphate aminotransferase</fullName>
        <ecNumber evidence="1">2.6.1.9</ecNumber>
    </recommendedName>
    <alternativeName>
        <fullName evidence="1">Imidazole acetol-phosphate transaminase</fullName>
    </alternativeName>
</protein>